<feature type="chain" id="PRO_0000150818" description="Olfactory receptor 5T18">
    <location>
        <begin position="1"/>
        <end position="325"/>
    </location>
</feature>
<feature type="topological domain" description="Extracellular" evidence="1">
    <location>
        <begin position="1"/>
        <end position="22"/>
    </location>
</feature>
<feature type="transmembrane region" description="Helical; Name=1" evidence="1">
    <location>
        <begin position="23"/>
        <end position="43"/>
    </location>
</feature>
<feature type="transmembrane region" description="Helical; Name=2" evidence="1">
    <location>
        <begin position="44"/>
        <end position="64"/>
    </location>
</feature>
<feature type="topological domain" description="Extracellular" evidence="1">
    <location>
        <begin position="65"/>
        <end position="97"/>
    </location>
</feature>
<feature type="transmembrane region" description="Helical; Name=3" evidence="1">
    <location>
        <begin position="98"/>
        <end position="118"/>
    </location>
</feature>
<feature type="topological domain" description="Cytoplasmic" evidence="1">
    <location>
        <begin position="119"/>
        <end position="139"/>
    </location>
</feature>
<feature type="transmembrane region" description="Helical; Name=4" evidence="1">
    <location>
        <begin position="140"/>
        <end position="160"/>
    </location>
</feature>
<feature type="topological domain" description="Extracellular" evidence="1">
    <location>
        <begin position="161"/>
        <end position="194"/>
    </location>
</feature>
<feature type="transmembrane region" description="Helical; Name=5" evidence="1">
    <location>
        <begin position="195"/>
        <end position="215"/>
    </location>
</feature>
<feature type="topological domain" description="Cytoplasmic" evidence="1">
    <location>
        <begin position="216"/>
        <end position="234"/>
    </location>
</feature>
<feature type="transmembrane region" description="Helical; Name=6" evidence="1">
    <location>
        <begin position="235"/>
        <end position="255"/>
    </location>
</feature>
<feature type="topological domain" description="Extracellular" evidence="1">
    <location>
        <begin position="256"/>
        <end position="269"/>
    </location>
</feature>
<feature type="transmembrane region" description="Helical; Name=7" evidence="1">
    <location>
        <begin position="270"/>
        <end position="290"/>
    </location>
</feature>
<feature type="topological domain" description="Cytoplasmic" evidence="1">
    <location>
        <begin position="291"/>
        <end position="325"/>
    </location>
</feature>
<feature type="glycosylation site" description="N-linked (GlcNAc...) asparagine" evidence="1">
    <location>
        <position position="3"/>
    </location>
</feature>
<feature type="disulfide bond" evidence="2">
    <location>
        <begin position="95"/>
        <end position="187"/>
    </location>
</feature>
<reference key="1">
    <citation type="journal article" date="2003" name="Genome Biol.">
        <title>Odorant receptor expressed sequence tags demonstrate olfactory expression of over 400 genes, extensive alternate splicing and unequal expression levels.</title>
        <authorList>
            <person name="Young J.M."/>
            <person name="Shykind B.M."/>
            <person name="Lane R.P."/>
            <person name="Tonnes-Priddy L."/>
            <person name="Ross J.A."/>
            <person name="Walker M."/>
            <person name="Williams E.M."/>
            <person name="Trask B.J."/>
        </authorList>
    </citation>
    <scope>NUCLEOTIDE SEQUENCE [GENOMIC DNA]</scope>
</reference>
<reference key="2">
    <citation type="journal article" date="1996" name="Proc. Natl. Acad. Sci. U.S.A.">
        <title>The chromosomal distribution of mouse odorant receptor genes.</title>
        <authorList>
            <person name="Sullivan S.L."/>
            <person name="Adamson M.C."/>
            <person name="Ressler K.J."/>
            <person name="Kozak C.A."/>
            <person name="Buck L.B."/>
        </authorList>
    </citation>
    <scope>NUCLEOTIDE SEQUENCE [GENOMIC DNA] OF 126-237</scope>
    <source>
        <strain>C57BL/6J</strain>
    </source>
</reference>
<sequence>MRNITEATFFVLKGLTDNNELQIILFLLFLAIYIFTLIGNVGLIILVVGDSQLHNPMYCFLSVLSSVDACYSTDITPNMLVGFMSKSKIISFYGCATQMFLAVTFGTTECFLLAAMAYDRYVAIHDPLLYAVSMSPRVYIPLIIASYAGGIVHAIIHTVATFSLSFCRSNEVKHIFCDIPPLLAISCSETYVNELLLFFFVSFIELVTILIVLVSYAFILLSILKMNSSEGRRKVFSTCGAHLTAVSIYYGTILFMYVRPSSNYSLEHDMIVSTFYTIGIPMLNPIIYSLRNKDVKEAMKRVLRKKINIKHRIKKLNDFSVFLMP</sequence>
<comment type="function">
    <text evidence="3">Potential odorant receptor.</text>
</comment>
<comment type="subcellular location">
    <subcellularLocation>
        <location evidence="3">Cell membrane</location>
        <topology evidence="1">Multi-pass membrane protein</topology>
    </subcellularLocation>
</comment>
<comment type="similarity">
    <text evidence="2">Belongs to the G-protein coupled receptor 1 family.</text>
</comment>
<proteinExistence type="inferred from homology"/>
<name>OL141_MOUSE</name>
<dbReference type="EMBL" id="AY318290">
    <property type="protein sequence ID" value="AAP71519.1"/>
    <property type="molecule type" value="Genomic_DNA"/>
</dbReference>
<dbReference type="EMBL" id="U28769">
    <property type="protein sequence ID" value="AAC52392.1"/>
    <property type="molecule type" value="Genomic_DNA"/>
</dbReference>
<dbReference type="SMR" id="Q60880"/>
<dbReference type="FunCoup" id="Q60880">
    <property type="interactions" value="135"/>
</dbReference>
<dbReference type="STRING" id="10090.ENSMUSP00000150485"/>
<dbReference type="GlyCosmos" id="Q60880">
    <property type="glycosylation" value="1 site, No reported glycans"/>
</dbReference>
<dbReference type="GlyGen" id="Q60880">
    <property type="glycosylation" value="1 site"/>
</dbReference>
<dbReference type="iPTMnet" id="Q60880"/>
<dbReference type="PhosphoSitePlus" id="Q60880"/>
<dbReference type="PaxDb" id="10090-ENSMUSP00000100847"/>
<dbReference type="UCSC" id="uc008kmy.1">
    <property type="organism name" value="mouse"/>
</dbReference>
<dbReference type="AGR" id="MGI:2177524"/>
<dbReference type="MGI" id="MGI:2177524">
    <property type="gene designation" value="Or5t18"/>
</dbReference>
<dbReference type="eggNOG" id="ENOG502SHA3">
    <property type="taxonomic scope" value="Eukaryota"/>
</dbReference>
<dbReference type="InParanoid" id="Q60880"/>
<dbReference type="PhylomeDB" id="Q60880"/>
<dbReference type="PRO" id="PR:Q60880"/>
<dbReference type="Proteomes" id="UP000000589">
    <property type="component" value="Unplaced"/>
</dbReference>
<dbReference type="RNAct" id="Q60880">
    <property type="molecule type" value="protein"/>
</dbReference>
<dbReference type="GO" id="GO:0016020">
    <property type="term" value="C:membrane"/>
    <property type="evidence" value="ECO:0000247"/>
    <property type="project" value="MGI"/>
</dbReference>
<dbReference type="GO" id="GO:0005886">
    <property type="term" value="C:plasma membrane"/>
    <property type="evidence" value="ECO:0007669"/>
    <property type="project" value="UniProtKB-SubCell"/>
</dbReference>
<dbReference type="GO" id="GO:0004930">
    <property type="term" value="F:G protein-coupled receptor activity"/>
    <property type="evidence" value="ECO:0007669"/>
    <property type="project" value="UniProtKB-KW"/>
</dbReference>
<dbReference type="GO" id="GO:0004984">
    <property type="term" value="F:olfactory receptor activity"/>
    <property type="evidence" value="ECO:0000247"/>
    <property type="project" value="MGI"/>
</dbReference>
<dbReference type="GO" id="GO:0007186">
    <property type="term" value="P:G protein-coupled receptor signaling pathway"/>
    <property type="evidence" value="ECO:0000247"/>
    <property type="project" value="MGI"/>
</dbReference>
<dbReference type="GO" id="GO:0007608">
    <property type="term" value="P:sensory perception of smell"/>
    <property type="evidence" value="ECO:0000247"/>
    <property type="project" value="MGI"/>
</dbReference>
<dbReference type="FunFam" id="1.20.1070.10:FF:000004">
    <property type="entry name" value="Olfactory receptor"/>
    <property type="match status" value="1"/>
</dbReference>
<dbReference type="Gene3D" id="1.20.1070.10">
    <property type="entry name" value="Rhodopsin 7-helix transmembrane proteins"/>
    <property type="match status" value="1"/>
</dbReference>
<dbReference type="InterPro" id="IPR000276">
    <property type="entry name" value="GPCR_Rhodpsn"/>
</dbReference>
<dbReference type="InterPro" id="IPR017452">
    <property type="entry name" value="GPCR_Rhodpsn_7TM"/>
</dbReference>
<dbReference type="InterPro" id="IPR000725">
    <property type="entry name" value="Olfact_rcpt"/>
</dbReference>
<dbReference type="PANTHER" id="PTHR48018">
    <property type="entry name" value="OLFACTORY RECEPTOR"/>
    <property type="match status" value="1"/>
</dbReference>
<dbReference type="Pfam" id="PF13853">
    <property type="entry name" value="7tm_4"/>
    <property type="match status" value="1"/>
</dbReference>
<dbReference type="PRINTS" id="PR00237">
    <property type="entry name" value="GPCRRHODOPSN"/>
</dbReference>
<dbReference type="PRINTS" id="PR00245">
    <property type="entry name" value="OLFACTORYR"/>
</dbReference>
<dbReference type="SUPFAM" id="SSF81321">
    <property type="entry name" value="Family A G protein-coupled receptor-like"/>
    <property type="match status" value="1"/>
</dbReference>
<dbReference type="PROSITE" id="PS00237">
    <property type="entry name" value="G_PROTEIN_RECEP_F1_1"/>
    <property type="match status" value="1"/>
</dbReference>
<dbReference type="PROSITE" id="PS50262">
    <property type="entry name" value="G_PROTEIN_RECEP_F1_2"/>
    <property type="match status" value="1"/>
</dbReference>
<organism>
    <name type="scientific">Mus musculus</name>
    <name type="common">Mouse</name>
    <dbReference type="NCBI Taxonomy" id="10090"/>
    <lineage>
        <taxon>Eukaryota</taxon>
        <taxon>Metazoa</taxon>
        <taxon>Chordata</taxon>
        <taxon>Craniata</taxon>
        <taxon>Vertebrata</taxon>
        <taxon>Euteleostomi</taxon>
        <taxon>Mammalia</taxon>
        <taxon>Eutheria</taxon>
        <taxon>Euarchontoglires</taxon>
        <taxon>Glires</taxon>
        <taxon>Rodentia</taxon>
        <taxon>Myomorpha</taxon>
        <taxon>Muroidea</taxon>
        <taxon>Muridae</taxon>
        <taxon>Murinae</taxon>
        <taxon>Mus</taxon>
        <taxon>Mus</taxon>
    </lineage>
</organism>
<protein>
    <recommendedName>
        <fullName evidence="3">Olfactory receptor 5T18</fullName>
    </recommendedName>
    <alternativeName>
        <fullName>Olfactory receptor 141</fullName>
    </alternativeName>
    <alternativeName>
        <fullName>Olfactory receptor 4B</fullName>
    </alternativeName>
</protein>
<keyword id="KW-1003">Cell membrane</keyword>
<keyword id="KW-1015">Disulfide bond</keyword>
<keyword id="KW-0297">G-protein coupled receptor</keyword>
<keyword id="KW-0325">Glycoprotein</keyword>
<keyword id="KW-0472">Membrane</keyword>
<keyword id="KW-0552">Olfaction</keyword>
<keyword id="KW-0675">Receptor</keyword>
<keyword id="KW-1185">Reference proteome</keyword>
<keyword id="KW-0716">Sensory transduction</keyword>
<keyword id="KW-0807">Transducer</keyword>
<keyword id="KW-0812">Transmembrane</keyword>
<keyword id="KW-1133">Transmembrane helix</keyword>
<accession>Q60880</accession>
<accession>Q7TR61</accession>
<evidence type="ECO:0000255" key="1"/>
<evidence type="ECO:0000255" key="2">
    <source>
        <dbReference type="PROSITE-ProRule" id="PRU00521"/>
    </source>
</evidence>
<evidence type="ECO:0000305" key="3"/>
<evidence type="ECO:0000312" key="4">
    <source>
        <dbReference type="MGI" id="MGI:2177524"/>
    </source>
</evidence>
<gene>
    <name evidence="4" type="primary">Or5t18</name>
    <name evidence="4" type="synonym">Olfr141</name>
    <name type="synonym">Olfr4</name>
</gene>